<protein>
    <recommendedName>
        <fullName evidence="1">DNA-directed RNA polymerase subunit beta'</fullName>
        <shortName evidence="1">RNAP subunit beta'</shortName>
        <ecNumber evidence="1">2.7.7.6</ecNumber>
    </recommendedName>
    <alternativeName>
        <fullName evidence="1">RNA polymerase subunit beta'</fullName>
    </alternativeName>
    <alternativeName>
        <fullName evidence="1">Transcriptase subunit beta'</fullName>
    </alternativeName>
</protein>
<organism>
    <name type="scientific">Roseiflexus castenholzii (strain DSM 13941 / HLO8)</name>
    <dbReference type="NCBI Taxonomy" id="383372"/>
    <lineage>
        <taxon>Bacteria</taxon>
        <taxon>Bacillati</taxon>
        <taxon>Chloroflexota</taxon>
        <taxon>Chloroflexia</taxon>
        <taxon>Chloroflexales</taxon>
        <taxon>Roseiflexineae</taxon>
        <taxon>Roseiflexaceae</taxon>
        <taxon>Roseiflexus</taxon>
    </lineage>
</organism>
<accession>A7NJM0</accession>
<feature type="chain" id="PRO_1000086410" description="DNA-directed RNA polymerase subunit beta'">
    <location>
        <begin position="1"/>
        <end position="1502"/>
    </location>
</feature>
<feature type="region of interest" description="Disordered" evidence="2">
    <location>
        <begin position="265"/>
        <end position="293"/>
    </location>
</feature>
<feature type="region of interest" description="Disordered" evidence="2">
    <location>
        <begin position="1472"/>
        <end position="1502"/>
    </location>
</feature>
<feature type="compositionally biased region" description="Basic and acidic residues" evidence="2">
    <location>
        <begin position="279"/>
        <end position="293"/>
    </location>
</feature>
<feature type="binding site" evidence="1">
    <location>
        <position position="60"/>
    </location>
    <ligand>
        <name>Zn(2+)</name>
        <dbReference type="ChEBI" id="CHEBI:29105"/>
        <label>1</label>
    </ligand>
</feature>
<feature type="binding site" evidence="1">
    <location>
        <position position="62"/>
    </location>
    <ligand>
        <name>Zn(2+)</name>
        <dbReference type="ChEBI" id="CHEBI:29105"/>
        <label>1</label>
    </ligand>
</feature>
<feature type="binding site" evidence="1">
    <location>
        <position position="75"/>
    </location>
    <ligand>
        <name>Zn(2+)</name>
        <dbReference type="ChEBI" id="CHEBI:29105"/>
        <label>1</label>
    </ligand>
</feature>
<feature type="binding site" evidence="1">
    <location>
        <position position="78"/>
    </location>
    <ligand>
        <name>Zn(2+)</name>
        <dbReference type="ChEBI" id="CHEBI:29105"/>
        <label>1</label>
    </ligand>
</feature>
<feature type="binding site" evidence="1">
    <location>
        <position position="626"/>
    </location>
    <ligand>
        <name>Mg(2+)</name>
        <dbReference type="ChEBI" id="CHEBI:18420"/>
    </ligand>
</feature>
<feature type="binding site" evidence="1">
    <location>
        <position position="628"/>
    </location>
    <ligand>
        <name>Mg(2+)</name>
        <dbReference type="ChEBI" id="CHEBI:18420"/>
    </ligand>
</feature>
<feature type="binding site" evidence="1">
    <location>
        <position position="630"/>
    </location>
    <ligand>
        <name>Mg(2+)</name>
        <dbReference type="ChEBI" id="CHEBI:18420"/>
    </ligand>
</feature>
<feature type="binding site" evidence="1">
    <location>
        <position position="1002"/>
    </location>
    <ligand>
        <name>Zn(2+)</name>
        <dbReference type="ChEBI" id="CHEBI:29105"/>
        <label>2</label>
    </ligand>
</feature>
<feature type="binding site" evidence="1">
    <location>
        <position position="1075"/>
    </location>
    <ligand>
        <name>Zn(2+)</name>
        <dbReference type="ChEBI" id="CHEBI:29105"/>
        <label>2</label>
    </ligand>
</feature>
<feature type="binding site" evidence="1">
    <location>
        <position position="1082"/>
    </location>
    <ligand>
        <name>Zn(2+)</name>
        <dbReference type="ChEBI" id="CHEBI:29105"/>
        <label>2</label>
    </ligand>
</feature>
<feature type="binding site" evidence="1">
    <location>
        <position position="1085"/>
    </location>
    <ligand>
        <name>Zn(2+)</name>
        <dbReference type="ChEBI" id="CHEBI:29105"/>
        <label>2</label>
    </ligand>
</feature>
<keyword id="KW-0240">DNA-directed RNA polymerase</keyword>
<keyword id="KW-0460">Magnesium</keyword>
<keyword id="KW-0479">Metal-binding</keyword>
<keyword id="KW-0548">Nucleotidyltransferase</keyword>
<keyword id="KW-1185">Reference proteome</keyword>
<keyword id="KW-0804">Transcription</keyword>
<keyword id="KW-0808">Transferase</keyword>
<keyword id="KW-0862">Zinc</keyword>
<dbReference type="EC" id="2.7.7.6" evidence="1"/>
<dbReference type="EMBL" id="CP000804">
    <property type="protein sequence ID" value="ABU57690.1"/>
    <property type="molecule type" value="Genomic_DNA"/>
</dbReference>
<dbReference type="RefSeq" id="WP_012120118.1">
    <property type="nucleotide sequence ID" value="NC_009767.1"/>
</dbReference>
<dbReference type="SMR" id="A7NJM0"/>
<dbReference type="STRING" id="383372.Rcas_1597"/>
<dbReference type="KEGG" id="rca:Rcas_1597"/>
<dbReference type="eggNOG" id="COG0086">
    <property type="taxonomic scope" value="Bacteria"/>
</dbReference>
<dbReference type="HOGENOM" id="CLU_000524_3_1_0"/>
<dbReference type="OrthoDB" id="9815296at2"/>
<dbReference type="Proteomes" id="UP000000263">
    <property type="component" value="Chromosome"/>
</dbReference>
<dbReference type="GO" id="GO:0000428">
    <property type="term" value="C:DNA-directed RNA polymerase complex"/>
    <property type="evidence" value="ECO:0007669"/>
    <property type="project" value="UniProtKB-KW"/>
</dbReference>
<dbReference type="GO" id="GO:0003677">
    <property type="term" value="F:DNA binding"/>
    <property type="evidence" value="ECO:0007669"/>
    <property type="project" value="UniProtKB-UniRule"/>
</dbReference>
<dbReference type="GO" id="GO:0003899">
    <property type="term" value="F:DNA-directed RNA polymerase activity"/>
    <property type="evidence" value="ECO:0007669"/>
    <property type="project" value="UniProtKB-UniRule"/>
</dbReference>
<dbReference type="GO" id="GO:0000287">
    <property type="term" value="F:magnesium ion binding"/>
    <property type="evidence" value="ECO:0007669"/>
    <property type="project" value="UniProtKB-UniRule"/>
</dbReference>
<dbReference type="GO" id="GO:0008270">
    <property type="term" value="F:zinc ion binding"/>
    <property type="evidence" value="ECO:0007669"/>
    <property type="project" value="UniProtKB-UniRule"/>
</dbReference>
<dbReference type="GO" id="GO:0006351">
    <property type="term" value="P:DNA-templated transcription"/>
    <property type="evidence" value="ECO:0007669"/>
    <property type="project" value="UniProtKB-UniRule"/>
</dbReference>
<dbReference type="CDD" id="cd02655">
    <property type="entry name" value="RNAP_beta'_C"/>
    <property type="match status" value="1"/>
</dbReference>
<dbReference type="CDD" id="cd01609">
    <property type="entry name" value="RNAP_beta'_N"/>
    <property type="match status" value="1"/>
</dbReference>
<dbReference type="FunFam" id="4.10.860.120:FF:000001">
    <property type="entry name" value="DNA-directed RNA polymerase subunit beta"/>
    <property type="match status" value="1"/>
</dbReference>
<dbReference type="Gene3D" id="1.10.132.30">
    <property type="match status" value="1"/>
</dbReference>
<dbReference type="Gene3D" id="1.10.150.390">
    <property type="match status" value="1"/>
</dbReference>
<dbReference type="Gene3D" id="1.10.1790.20">
    <property type="match status" value="1"/>
</dbReference>
<dbReference type="Gene3D" id="1.10.40.90">
    <property type="match status" value="1"/>
</dbReference>
<dbReference type="Gene3D" id="2.40.40.20">
    <property type="match status" value="1"/>
</dbReference>
<dbReference type="Gene3D" id="2.40.50.100">
    <property type="match status" value="2"/>
</dbReference>
<dbReference type="Gene3D" id="4.10.860.120">
    <property type="entry name" value="RNA polymerase II, clamp domain"/>
    <property type="match status" value="1"/>
</dbReference>
<dbReference type="Gene3D" id="1.10.274.100">
    <property type="entry name" value="RNA polymerase Rpb1, domain 3"/>
    <property type="match status" value="1"/>
</dbReference>
<dbReference type="HAMAP" id="MF_01322">
    <property type="entry name" value="RNApol_bact_RpoC"/>
    <property type="match status" value="1"/>
</dbReference>
<dbReference type="InterPro" id="IPR045867">
    <property type="entry name" value="DNA-dir_RpoC_beta_prime"/>
</dbReference>
<dbReference type="InterPro" id="IPR012754">
    <property type="entry name" value="DNA-dir_RpoC_beta_prime_bact"/>
</dbReference>
<dbReference type="InterPro" id="IPR000722">
    <property type="entry name" value="RNA_pol_asu"/>
</dbReference>
<dbReference type="InterPro" id="IPR006592">
    <property type="entry name" value="RNA_pol_N"/>
</dbReference>
<dbReference type="InterPro" id="IPR007080">
    <property type="entry name" value="RNA_pol_Rpb1_1"/>
</dbReference>
<dbReference type="InterPro" id="IPR007066">
    <property type="entry name" value="RNA_pol_Rpb1_3"/>
</dbReference>
<dbReference type="InterPro" id="IPR042102">
    <property type="entry name" value="RNA_pol_Rpb1_3_sf"/>
</dbReference>
<dbReference type="InterPro" id="IPR007083">
    <property type="entry name" value="RNA_pol_Rpb1_4"/>
</dbReference>
<dbReference type="InterPro" id="IPR007081">
    <property type="entry name" value="RNA_pol_Rpb1_5"/>
</dbReference>
<dbReference type="InterPro" id="IPR044893">
    <property type="entry name" value="RNA_pol_Rpb1_clamp_domain"/>
</dbReference>
<dbReference type="InterPro" id="IPR038120">
    <property type="entry name" value="Rpb1_funnel_sf"/>
</dbReference>
<dbReference type="PANTHER" id="PTHR19376">
    <property type="entry name" value="DNA-DIRECTED RNA POLYMERASE"/>
    <property type="match status" value="1"/>
</dbReference>
<dbReference type="PANTHER" id="PTHR19376:SF54">
    <property type="entry name" value="DNA-DIRECTED RNA POLYMERASE SUBUNIT BETA"/>
    <property type="match status" value="1"/>
</dbReference>
<dbReference type="Pfam" id="PF04997">
    <property type="entry name" value="RNA_pol_Rpb1_1"/>
    <property type="match status" value="1"/>
</dbReference>
<dbReference type="Pfam" id="PF00623">
    <property type="entry name" value="RNA_pol_Rpb1_2"/>
    <property type="match status" value="1"/>
</dbReference>
<dbReference type="Pfam" id="PF04983">
    <property type="entry name" value="RNA_pol_Rpb1_3"/>
    <property type="match status" value="1"/>
</dbReference>
<dbReference type="Pfam" id="PF05000">
    <property type="entry name" value="RNA_pol_Rpb1_4"/>
    <property type="match status" value="1"/>
</dbReference>
<dbReference type="Pfam" id="PF04998">
    <property type="entry name" value="RNA_pol_Rpb1_5"/>
    <property type="match status" value="1"/>
</dbReference>
<dbReference type="SMART" id="SM00663">
    <property type="entry name" value="RPOLA_N"/>
    <property type="match status" value="1"/>
</dbReference>
<dbReference type="SUPFAM" id="SSF64484">
    <property type="entry name" value="beta and beta-prime subunits of DNA dependent RNA-polymerase"/>
    <property type="match status" value="1"/>
</dbReference>
<sequence length="1502" mass="169134">MLEINDFSAIRISLASPEDILSWSHGEVTKPETINYRTLKPERDGLFCERIFGPTKDWECYCGKYKRVRYKGVVCDKCGVEVTRSKVRRERMGHISLASPVSHIWFVKGTPSRLGLLLDISPRNLERVLYFASYIIVHVDEEVKAHRREALQAEYREKRERIQAEAESRQIELSTQLTQDLGGMESAQLSTQRRIEEEYRRLRDEISAEAERLRTDLEEKQGEAAEEDIIFRGTVLVEEGESITEKTLDALDELLDQELETLEQRKQRDLEDAEQLTGAERERKEYEASQERERLQERLQSELDRLVREEKERLEQLDSIKLKRILNEQEYRALREIAPGAFRADMGAGAIRDLIVRTVDLDKLAEELQNEVYTTQGQRRKKATKRLRVVEAFRKSGNRPEWMILTVLPVIPPDLRPMVQLDGGRFATSDLNDLYRRVINRNNRLKRLMELNAPEIIVRNEKRMLQEAVDALIDNGRRGRAVSGKGKHRLKSLSDMLKGKQGRFRQNLLGKRVDYSGRSVIVVGPDLKLHQCGLPKKMALELFKPFVMRRLVEKGAAHNIKSAKRIVERVRPEVWDVLEEVIKDYLVLLNRAPSLHRLSIQAFEAKLIEGSAIQLHPLVCAAFNADFDGDQMAVHVPLSRKAQEEARMRMLSKYNLLSPATGDPIITPSQDIVLGCYYLTMVRDGAKGSGKMFASIDEALLAYDKGLVDIQAPIFVRMTGTLHGESDRPVRILNSDENGAPRMLLETTIGRIIFNNELLEPLRFRNRLIAKKGLREIIADCYKYYTNLNNLTEADLDTIRTMYGDRPRDDLARYFGSEMTASQADRIKTLGFKYATRGGMTIGVDDIEIPPKKQEILAEAEKRVAEVERQFRRGLITEEERYREIVEIWQNATKQTTEAVKQYLNPFGPVAMMVNSAARGNINQLSQMAGMRGLMSDPTGRIIELPIKSNFREGLSVLEYFVSTHGGRKGLADTALRTADAGYLTRRLIDVAQDNIVTIDDCGTDEGLWIYRSDDREVLQDFEQRILGRLLAAPLVDPRTGEVLADRNAEIDEALTRRCKELGIDAVYVRSPLACKADYGICRMCYGRNLATGKLVDIGEAVGIIAAQSIGEPGTQLTLRTFHTGGVASADDITQGLPRVQEIFEARTPKGKAILAEIDGIVELVREDEVRKIRVVSTDLYTDDHVLPPHYEPVVADGAQVNEGDVLAQSNRADLDSEPIVARLAGVVRIGAGQISVINEEREVREVIAPHTARLAAGIENGARVVAGQHLTEGSADPQELLALQGREAVQRYLVNEAQKVYRSQGVDINDKHIEVIVRQMLRRVRIEEPGDTDYLPGELIDSTEFVRRNAEIISQGGEPATASTMLLGITKASLTTDSFLAAASFQETTRVLTEAAITGKVDYLRGLKENVVIGKLIPAGTGIEKRRQLAEEVIGELANVVPTSTAVVEQERPEREADEALRRRLRALIGSDDNGDEVGKNGEFADETPFTGDSDDRDNEI</sequence>
<proteinExistence type="inferred from homology"/>
<gene>
    <name evidence="1" type="primary">rpoC</name>
    <name type="ordered locus">Rcas_1597</name>
</gene>
<evidence type="ECO:0000255" key="1">
    <source>
        <dbReference type="HAMAP-Rule" id="MF_01322"/>
    </source>
</evidence>
<evidence type="ECO:0000256" key="2">
    <source>
        <dbReference type="SAM" id="MobiDB-lite"/>
    </source>
</evidence>
<comment type="function">
    <text evidence="1">DNA-dependent RNA polymerase catalyzes the transcription of DNA into RNA using the four ribonucleoside triphosphates as substrates.</text>
</comment>
<comment type="catalytic activity">
    <reaction evidence="1">
        <text>RNA(n) + a ribonucleoside 5'-triphosphate = RNA(n+1) + diphosphate</text>
        <dbReference type="Rhea" id="RHEA:21248"/>
        <dbReference type="Rhea" id="RHEA-COMP:14527"/>
        <dbReference type="Rhea" id="RHEA-COMP:17342"/>
        <dbReference type="ChEBI" id="CHEBI:33019"/>
        <dbReference type="ChEBI" id="CHEBI:61557"/>
        <dbReference type="ChEBI" id="CHEBI:140395"/>
        <dbReference type="EC" id="2.7.7.6"/>
    </reaction>
</comment>
<comment type="cofactor">
    <cofactor evidence="1">
        <name>Mg(2+)</name>
        <dbReference type="ChEBI" id="CHEBI:18420"/>
    </cofactor>
    <text evidence="1">Binds 1 Mg(2+) ion per subunit.</text>
</comment>
<comment type="cofactor">
    <cofactor evidence="1">
        <name>Zn(2+)</name>
        <dbReference type="ChEBI" id="CHEBI:29105"/>
    </cofactor>
    <text evidence="1">Binds 2 Zn(2+) ions per subunit.</text>
</comment>
<comment type="subunit">
    <text evidence="1">The RNAP catalytic core consists of 2 alpha, 1 beta, 1 beta' and 1 omega subunit. When a sigma factor is associated with the core the holoenzyme is formed, which can initiate transcription.</text>
</comment>
<comment type="similarity">
    <text evidence="1">Belongs to the RNA polymerase beta' chain family.</text>
</comment>
<name>RPOC_ROSCS</name>
<reference key="1">
    <citation type="submission" date="2007-08" db="EMBL/GenBank/DDBJ databases">
        <title>Complete sequence of Roseiflexus castenholzii DSM 13941.</title>
        <authorList>
            <consortium name="US DOE Joint Genome Institute"/>
            <person name="Copeland A."/>
            <person name="Lucas S."/>
            <person name="Lapidus A."/>
            <person name="Barry K."/>
            <person name="Glavina del Rio T."/>
            <person name="Dalin E."/>
            <person name="Tice H."/>
            <person name="Pitluck S."/>
            <person name="Thompson L.S."/>
            <person name="Brettin T."/>
            <person name="Bruce D."/>
            <person name="Detter J.C."/>
            <person name="Han C."/>
            <person name="Tapia R."/>
            <person name="Schmutz J."/>
            <person name="Larimer F."/>
            <person name="Land M."/>
            <person name="Hauser L."/>
            <person name="Kyrpides N."/>
            <person name="Mikhailova N."/>
            <person name="Bryant D.A."/>
            <person name="Hanada S."/>
            <person name="Tsukatani Y."/>
            <person name="Richardson P."/>
        </authorList>
    </citation>
    <scope>NUCLEOTIDE SEQUENCE [LARGE SCALE GENOMIC DNA]</scope>
    <source>
        <strain>DSM 13941 / HLO8</strain>
    </source>
</reference>